<keyword id="KW-0963">Cytoplasm</keyword>
<keyword id="KW-0444">Lipid biosynthesis</keyword>
<keyword id="KW-0443">Lipid metabolism</keyword>
<keyword id="KW-0594">Phospholipid biosynthesis</keyword>
<keyword id="KW-1208">Phospholipid metabolism</keyword>
<keyword id="KW-0808">Transferase</keyword>
<organism>
    <name type="scientific">Francisella tularensis subsp. holarctica (strain FTNF002-00 / FTA)</name>
    <dbReference type="NCBI Taxonomy" id="458234"/>
    <lineage>
        <taxon>Bacteria</taxon>
        <taxon>Pseudomonadati</taxon>
        <taxon>Pseudomonadota</taxon>
        <taxon>Gammaproteobacteria</taxon>
        <taxon>Thiotrichales</taxon>
        <taxon>Francisellaceae</taxon>
        <taxon>Francisella</taxon>
    </lineage>
</organism>
<sequence>MGYKISIDAMGGDHGLNTTIPAALEAVKKDSNLQIVLVGDHHKIKRALDRYSKVKKIKLPVLQRIAIHHASETVGMDESPSIAVRKKKDSSMRVAINLVKDRTVDACVSAGNTGALMATSKFVLKTINGVDRPAIVYALPAFNRETKQLSKTYMLDLGANVVCTSEQLFQFAIMGSILAASSKGIAEPRVSLLNIGEEEMKGLDNIKNAAKLLQGCDFINYNGYIEGKYIFDDTTDVIVCDGFVGNVSLKTMEGSLRLIESLIKKTIQESSLLMKIPIVMALPIFKKMKKGMNLDSFNGASLLGLTGIVVKSHGGASANAFETAIYEAIKEIKYNIPKTIQESLEKVL</sequence>
<accession>A7NCH8</accession>
<proteinExistence type="inferred from homology"/>
<name>PLSX_FRATF</name>
<comment type="function">
    <text evidence="1">Catalyzes the reversible formation of acyl-phosphate (acyl-PO(4)) from acyl-[acyl-carrier-protein] (acyl-ACP). This enzyme utilizes acyl-ACP as fatty acyl donor, but not acyl-CoA.</text>
</comment>
<comment type="catalytic activity">
    <reaction evidence="1">
        <text>a fatty acyl-[ACP] + phosphate = an acyl phosphate + holo-[ACP]</text>
        <dbReference type="Rhea" id="RHEA:42292"/>
        <dbReference type="Rhea" id="RHEA-COMP:9685"/>
        <dbReference type="Rhea" id="RHEA-COMP:14125"/>
        <dbReference type="ChEBI" id="CHEBI:43474"/>
        <dbReference type="ChEBI" id="CHEBI:59918"/>
        <dbReference type="ChEBI" id="CHEBI:64479"/>
        <dbReference type="ChEBI" id="CHEBI:138651"/>
        <dbReference type="EC" id="2.3.1.274"/>
    </reaction>
</comment>
<comment type="pathway">
    <text evidence="1">Lipid metabolism; phospholipid metabolism.</text>
</comment>
<comment type="subunit">
    <text evidence="1">Homodimer. Probably interacts with PlsY.</text>
</comment>
<comment type="subcellular location">
    <subcellularLocation>
        <location evidence="1">Cytoplasm</location>
    </subcellularLocation>
    <text evidence="1">Associated with the membrane possibly through PlsY.</text>
</comment>
<comment type="similarity">
    <text evidence="1">Belongs to the PlsX family.</text>
</comment>
<reference key="1">
    <citation type="journal article" date="2009" name="PLoS ONE">
        <title>Complete genome sequence of Francisella tularensis subspecies holarctica FTNF002-00.</title>
        <authorList>
            <person name="Barabote R.D."/>
            <person name="Xie G."/>
            <person name="Brettin T.S."/>
            <person name="Hinrichs S.H."/>
            <person name="Fey P.D."/>
            <person name="Jay J.J."/>
            <person name="Engle J.L."/>
            <person name="Godbole S.D."/>
            <person name="Noronha J.M."/>
            <person name="Scheuermann R.H."/>
            <person name="Zhou L.W."/>
            <person name="Lion C."/>
            <person name="Dempsey M.P."/>
        </authorList>
    </citation>
    <scope>NUCLEOTIDE SEQUENCE [LARGE SCALE GENOMIC DNA]</scope>
    <source>
        <strain>FTNF002-00 / FTA</strain>
    </source>
</reference>
<feature type="chain" id="PRO_1000001761" description="Phosphate acyltransferase">
    <location>
        <begin position="1"/>
        <end position="348"/>
    </location>
</feature>
<gene>
    <name evidence="1" type="primary">plsX</name>
    <name type="ordered locus">FTA_1205</name>
</gene>
<dbReference type="EC" id="2.3.1.274" evidence="1"/>
<dbReference type="EMBL" id="CP000803">
    <property type="protein sequence ID" value="ABU61681.1"/>
    <property type="molecule type" value="Genomic_DNA"/>
</dbReference>
<dbReference type="RefSeq" id="WP_003016130.1">
    <property type="nucleotide sequence ID" value="NC_009749.1"/>
</dbReference>
<dbReference type="SMR" id="A7NCH8"/>
<dbReference type="KEGG" id="fta:FTA_1205"/>
<dbReference type="HOGENOM" id="CLU_039379_1_0_6"/>
<dbReference type="UniPathway" id="UPA00085"/>
<dbReference type="GO" id="GO:0005737">
    <property type="term" value="C:cytoplasm"/>
    <property type="evidence" value="ECO:0007669"/>
    <property type="project" value="UniProtKB-SubCell"/>
</dbReference>
<dbReference type="GO" id="GO:0043811">
    <property type="term" value="F:phosphate:acyl-[acyl carrier protein] acyltransferase activity"/>
    <property type="evidence" value="ECO:0007669"/>
    <property type="project" value="UniProtKB-UniRule"/>
</dbReference>
<dbReference type="GO" id="GO:0006633">
    <property type="term" value="P:fatty acid biosynthetic process"/>
    <property type="evidence" value="ECO:0007669"/>
    <property type="project" value="UniProtKB-UniRule"/>
</dbReference>
<dbReference type="GO" id="GO:0008654">
    <property type="term" value="P:phospholipid biosynthetic process"/>
    <property type="evidence" value="ECO:0007669"/>
    <property type="project" value="UniProtKB-KW"/>
</dbReference>
<dbReference type="Gene3D" id="3.40.718.10">
    <property type="entry name" value="Isopropylmalate Dehydrogenase"/>
    <property type="match status" value="1"/>
</dbReference>
<dbReference type="HAMAP" id="MF_00019">
    <property type="entry name" value="PlsX"/>
    <property type="match status" value="1"/>
</dbReference>
<dbReference type="InterPro" id="IPR003664">
    <property type="entry name" value="FA_synthesis"/>
</dbReference>
<dbReference type="InterPro" id="IPR012281">
    <property type="entry name" value="Phospholipid_synth_PlsX-like"/>
</dbReference>
<dbReference type="NCBIfam" id="TIGR00182">
    <property type="entry name" value="plsX"/>
    <property type="match status" value="1"/>
</dbReference>
<dbReference type="PANTHER" id="PTHR30100">
    <property type="entry name" value="FATTY ACID/PHOSPHOLIPID SYNTHESIS PROTEIN PLSX"/>
    <property type="match status" value="1"/>
</dbReference>
<dbReference type="PANTHER" id="PTHR30100:SF1">
    <property type="entry name" value="PHOSPHATE ACYLTRANSFERASE"/>
    <property type="match status" value="1"/>
</dbReference>
<dbReference type="Pfam" id="PF02504">
    <property type="entry name" value="FA_synthesis"/>
    <property type="match status" value="1"/>
</dbReference>
<dbReference type="PIRSF" id="PIRSF002465">
    <property type="entry name" value="Phsphlp_syn_PlsX"/>
    <property type="match status" value="1"/>
</dbReference>
<dbReference type="SUPFAM" id="SSF53659">
    <property type="entry name" value="Isocitrate/Isopropylmalate dehydrogenase-like"/>
    <property type="match status" value="1"/>
</dbReference>
<protein>
    <recommendedName>
        <fullName evidence="1">Phosphate acyltransferase</fullName>
        <ecNumber evidence="1">2.3.1.274</ecNumber>
    </recommendedName>
    <alternativeName>
        <fullName evidence="1">Acyl-ACP phosphotransacylase</fullName>
    </alternativeName>
    <alternativeName>
        <fullName evidence="1">Acyl-[acyl-carrier-protein]--phosphate acyltransferase</fullName>
    </alternativeName>
    <alternativeName>
        <fullName evidence="1">Phosphate-acyl-ACP acyltransferase</fullName>
    </alternativeName>
</protein>
<evidence type="ECO:0000255" key="1">
    <source>
        <dbReference type="HAMAP-Rule" id="MF_00019"/>
    </source>
</evidence>